<evidence type="ECO:0000250" key="1"/>
<evidence type="ECO:0000255" key="2">
    <source>
        <dbReference type="HAMAP-Rule" id="MF_00248"/>
    </source>
</evidence>
<sequence length="185" mass="19898">MTTIVSVRRNNKVVIAGDGQVSLGNTVMKGNARKVRRLYNNKVLAGFAGGTADAFTLFERFESKLQMHQGHLTKAAVELAKDWRSDRALRRLEAILAVADETASLIITGNGDVLQPEHDLIAIGSGGNYAQAAAIALLENTELDARTIAEKALNIAGDICVFTNHHHTIEELEIPQAMLPQGASA</sequence>
<accession>Q9KNQ6</accession>
<organism>
    <name type="scientific">Vibrio cholerae serotype O1 (strain ATCC 39315 / El Tor Inaba N16961)</name>
    <dbReference type="NCBI Taxonomy" id="243277"/>
    <lineage>
        <taxon>Bacteria</taxon>
        <taxon>Pseudomonadati</taxon>
        <taxon>Pseudomonadota</taxon>
        <taxon>Gammaproteobacteria</taxon>
        <taxon>Vibrionales</taxon>
        <taxon>Vibrionaceae</taxon>
        <taxon>Vibrio</taxon>
    </lineage>
</organism>
<keyword id="KW-0021">Allosteric enzyme</keyword>
<keyword id="KW-0963">Cytoplasm</keyword>
<keyword id="KW-0378">Hydrolase</keyword>
<keyword id="KW-0479">Metal-binding</keyword>
<keyword id="KW-0645">Protease</keyword>
<keyword id="KW-1185">Reference proteome</keyword>
<keyword id="KW-0915">Sodium</keyword>
<keyword id="KW-0888">Threonine protease</keyword>
<dbReference type="EC" id="3.4.25.2" evidence="2"/>
<dbReference type="EMBL" id="AE003852">
    <property type="protein sequence ID" value="AAF95816.1"/>
    <property type="molecule type" value="Genomic_DNA"/>
</dbReference>
<dbReference type="PIR" id="F82046">
    <property type="entry name" value="F82046"/>
</dbReference>
<dbReference type="RefSeq" id="NP_232303.1">
    <property type="nucleotide sequence ID" value="NC_002505.1"/>
</dbReference>
<dbReference type="RefSeq" id="WP_000208249.1">
    <property type="nucleotide sequence ID" value="NZ_LT906614.1"/>
</dbReference>
<dbReference type="SMR" id="Q9KNQ6"/>
<dbReference type="STRING" id="243277.VC_2675"/>
<dbReference type="MEROPS" id="T01.006"/>
<dbReference type="DNASU" id="2615503"/>
<dbReference type="EnsemblBacteria" id="AAF95816">
    <property type="protein sequence ID" value="AAF95816"/>
    <property type="gene ID" value="VC_2675"/>
</dbReference>
<dbReference type="GeneID" id="88785229"/>
<dbReference type="KEGG" id="vch:VC_2675"/>
<dbReference type="PATRIC" id="fig|243277.26.peg.2550"/>
<dbReference type="eggNOG" id="COG5405">
    <property type="taxonomic scope" value="Bacteria"/>
</dbReference>
<dbReference type="HOGENOM" id="CLU_093872_1_0_6"/>
<dbReference type="Proteomes" id="UP000000584">
    <property type="component" value="Chromosome 1"/>
</dbReference>
<dbReference type="GO" id="GO:0005737">
    <property type="term" value="C:cytoplasm"/>
    <property type="evidence" value="ECO:0000318"/>
    <property type="project" value="GO_Central"/>
</dbReference>
<dbReference type="GO" id="GO:0009376">
    <property type="term" value="C:HslUV protease complex"/>
    <property type="evidence" value="ECO:0007669"/>
    <property type="project" value="UniProtKB-UniRule"/>
</dbReference>
<dbReference type="GO" id="GO:0005839">
    <property type="term" value="C:proteasome core complex"/>
    <property type="evidence" value="ECO:0007669"/>
    <property type="project" value="InterPro"/>
</dbReference>
<dbReference type="GO" id="GO:0046872">
    <property type="term" value="F:metal ion binding"/>
    <property type="evidence" value="ECO:0007669"/>
    <property type="project" value="UniProtKB-KW"/>
</dbReference>
<dbReference type="GO" id="GO:0004298">
    <property type="term" value="F:threonine-type endopeptidase activity"/>
    <property type="evidence" value="ECO:0007669"/>
    <property type="project" value="UniProtKB-KW"/>
</dbReference>
<dbReference type="GO" id="GO:0051603">
    <property type="term" value="P:proteolysis involved in protein catabolic process"/>
    <property type="evidence" value="ECO:0000318"/>
    <property type="project" value="GO_Central"/>
</dbReference>
<dbReference type="CDD" id="cd01913">
    <property type="entry name" value="protease_HslV"/>
    <property type="match status" value="1"/>
</dbReference>
<dbReference type="FunFam" id="3.60.20.10:FF:000002">
    <property type="entry name" value="ATP-dependent protease subunit HslV"/>
    <property type="match status" value="1"/>
</dbReference>
<dbReference type="Gene3D" id="3.60.20.10">
    <property type="entry name" value="Glutamine Phosphoribosylpyrophosphate, subunit 1, domain 1"/>
    <property type="match status" value="1"/>
</dbReference>
<dbReference type="HAMAP" id="MF_00248">
    <property type="entry name" value="HslV"/>
    <property type="match status" value="1"/>
</dbReference>
<dbReference type="InterPro" id="IPR022281">
    <property type="entry name" value="ATP-dep_Prtase_HsIV_su"/>
</dbReference>
<dbReference type="InterPro" id="IPR029055">
    <property type="entry name" value="Ntn_hydrolases_N"/>
</dbReference>
<dbReference type="InterPro" id="IPR001353">
    <property type="entry name" value="Proteasome_sua/b"/>
</dbReference>
<dbReference type="InterPro" id="IPR023333">
    <property type="entry name" value="Proteasome_suB-type"/>
</dbReference>
<dbReference type="NCBIfam" id="TIGR03692">
    <property type="entry name" value="ATP_dep_HslV"/>
    <property type="match status" value="1"/>
</dbReference>
<dbReference type="NCBIfam" id="NF003964">
    <property type="entry name" value="PRK05456.1"/>
    <property type="match status" value="1"/>
</dbReference>
<dbReference type="PANTHER" id="PTHR32194:SF0">
    <property type="entry name" value="ATP-DEPENDENT PROTEASE SUBUNIT HSLV"/>
    <property type="match status" value="1"/>
</dbReference>
<dbReference type="PANTHER" id="PTHR32194">
    <property type="entry name" value="METALLOPROTEASE TLDD"/>
    <property type="match status" value="1"/>
</dbReference>
<dbReference type="Pfam" id="PF00227">
    <property type="entry name" value="Proteasome"/>
    <property type="match status" value="1"/>
</dbReference>
<dbReference type="PIRSF" id="PIRSF039093">
    <property type="entry name" value="HslV"/>
    <property type="match status" value="1"/>
</dbReference>
<dbReference type="SUPFAM" id="SSF56235">
    <property type="entry name" value="N-terminal nucleophile aminohydrolases (Ntn hydrolases)"/>
    <property type="match status" value="1"/>
</dbReference>
<dbReference type="PROSITE" id="PS51476">
    <property type="entry name" value="PROTEASOME_BETA_2"/>
    <property type="match status" value="1"/>
</dbReference>
<reference key="1">
    <citation type="journal article" date="2000" name="Nature">
        <title>DNA sequence of both chromosomes of the cholera pathogen Vibrio cholerae.</title>
        <authorList>
            <person name="Heidelberg J.F."/>
            <person name="Eisen J.A."/>
            <person name="Nelson W.C."/>
            <person name="Clayton R.A."/>
            <person name="Gwinn M.L."/>
            <person name="Dodson R.J."/>
            <person name="Haft D.H."/>
            <person name="Hickey E.K."/>
            <person name="Peterson J.D."/>
            <person name="Umayam L.A."/>
            <person name="Gill S.R."/>
            <person name="Nelson K.E."/>
            <person name="Read T.D."/>
            <person name="Tettelin H."/>
            <person name="Richardson D.L."/>
            <person name="Ermolaeva M.D."/>
            <person name="Vamathevan J.J."/>
            <person name="Bass S."/>
            <person name="Qin H."/>
            <person name="Dragoi I."/>
            <person name="Sellers P."/>
            <person name="McDonald L.A."/>
            <person name="Utterback T.R."/>
            <person name="Fleischmann R.D."/>
            <person name="Nierman W.C."/>
            <person name="White O."/>
            <person name="Salzberg S.L."/>
            <person name="Smith H.O."/>
            <person name="Colwell R.R."/>
            <person name="Mekalanos J.J."/>
            <person name="Venter J.C."/>
            <person name="Fraser C.M."/>
        </authorList>
    </citation>
    <scope>NUCLEOTIDE SEQUENCE [LARGE SCALE GENOMIC DNA]</scope>
    <source>
        <strain>ATCC 39315 / El Tor Inaba N16961</strain>
    </source>
</reference>
<proteinExistence type="inferred from homology"/>
<gene>
    <name evidence="2" type="primary">hslV</name>
    <name type="ordered locus">VC_2675</name>
</gene>
<comment type="function">
    <text evidence="2">Protease subunit of a proteasome-like degradation complex believed to be a general protein degrading machinery.</text>
</comment>
<comment type="catalytic activity">
    <reaction evidence="2">
        <text>ATP-dependent cleavage of peptide bonds with broad specificity.</text>
        <dbReference type="EC" id="3.4.25.2"/>
    </reaction>
</comment>
<comment type="activity regulation">
    <text evidence="2">Allosterically activated by HslU binding.</text>
</comment>
<comment type="subunit">
    <text evidence="2">A double ring-shaped homohexamer of HslV is capped on each side by a ring-shaped HslU homohexamer. The assembly of the HslU/HslV complex is dependent on binding of ATP.</text>
</comment>
<comment type="subcellular location">
    <subcellularLocation>
        <location evidence="2">Cytoplasm</location>
    </subcellularLocation>
</comment>
<comment type="similarity">
    <text evidence="2">Belongs to the peptidase T1B family. HslV subfamily.</text>
</comment>
<protein>
    <recommendedName>
        <fullName evidence="2">ATP-dependent protease subunit HslV</fullName>
        <ecNumber evidence="2">3.4.25.2</ecNumber>
    </recommendedName>
</protein>
<name>HSLV_VIBCH</name>
<feature type="initiator methionine" description="Removed" evidence="1">
    <location>
        <position position="1"/>
    </location>
</feature>
<feature type="chain" id="PRO_0000148157" description="ATP-dependent protease subunit HslV">
    <location>
        <begin position="2"/>
        <end position="185"/>
    </location>
</feature>
<feature type="active site" evidence="2">
    <location>
        <position position="2"/>
    </location>
</feature>
<feature type="binding site" evidence="2">
    <location>
        <position position="157"/>
    </location>
    <ligand>
        <name>Na(+)</name>
        <dbReference type="ChEBI" id="CHEBI:29101"/>
    </ligand>
</feature>
<feature type="binding site" evidence="2">
    <location>
        <position position="160"/>
    </location>
    <ligand>
        <name>Na(+)</name>
        <dbReference type="ChEBI" id="CHEBI:29101"/>
    </ligand>
</feature>
<feature type="binding site" evidence="2">
    <location>
        <position position="163"/>
    </location>
    <ligand>
        <name>Na(+)</name>
        <dbReference type="ChEBI" id="CHEBI:29101"/>
    </ligand>
</feature>